<feature type="signal peptide" evidence="1">
    <location>
        <begin position="1"/>
        <end position="20"/>
    </location>
</feature>
<feature type="chain" id="PRO_0000003480" description="Vitamin B12 transporter BtuB">
    <location>
        <begin position="21"/>
        <end position="614"/>
    </location>
</feature>
<feature type="transmembrane region" description="Beta stranded" evidence="2">
    <location>
        <begin position="158"/>
        <end position="165"/>
    </location>
</feature>
<feature type="transmembrane region" description="Beta stranded" evidence="2">
    <location>
        <begin position="169"/>
        <end position="178"/>
    </location>
</feature>
<feature type="transmembrane region" description="Beta stranded" evidence="2">
    <location>
        <begin position="184"/>
        <end position="195"/>
    </location>
</feature>
<feature type="transmembrane region" description="Beta stranded" evidence="2">
    <location>
        <begin position="217"/>
        <end position="227"/>
    </location>
</feature>
<feature type="transmembrane region" description="Beta stranded" evidence="2">
    <location>
        <begin position="232"/>
        <end position="248"/>
    </location>
</feature>
<feature type="transmembrane region" description="Beta stranded" evidence="2">
    <location>
        <begin position="263"/>
        <end position="277"/>
    </location>
</feature>
<feature type="transmembrane region" description="Beta stranded" evidence="2">
    <location>
        <begin position="279"/>
        <end position="296"/>
    </location>
</feature>
<feature type="transmembrane region" description="Beta stranded" evidence="2">
    <location>
        <begin position="309"/>
        <end position="325"/>
    </location>
</feature>
<feature type="transmembrane region" description="Beta stranded" evidence="2">
    <location>
        <begin position="328"/>
        <end position="337"/>
    </location>
</feature>
<feature type="transmembrane region" description="Beta stranded" evidence="2">
    <location>
        <begin position="353"/>
        <end position="369"/>
    </location>
</feature>
<feature type="transmembrane region" description="Beta stranded" evidence="2">
    <location>
        <begin position="371"/>
        <end position="381"/>
    </location>
</feature>
<feature type="transmembrane region" description="Beta stranded" evidence="2">
    <location>
        <begin position="385"/>
        <end position="400"/>
    </location>
</feature>
<feature type="transmembrane region" description="Beta stranded" evidence="2">
    <location>
        <begin position="403"/>
        <end position="417"/>
    </location>
</feature>
<feature type="transmembrane region" description="Beta stranded" evidence="2">
    <location>
        <begin position="434"/>
        <end position="443"/>
    </location>
</feature>
<feature type="transmembrane region" description="Beta stranded" evidence="2">
    <location>
        <begin position="449"/>
        <end position="458"/>
    </location>
</feature>
<feature type="transmembrane region" description="Beta stranded" evidence="2">
    <location>
        <begin position="473"/>
        <end position="490"/>
    </location>
</feature>
<feature type="transmembrane region" description="Beta stranded" evidence="2">
    <location>
        <begin position="494"/>
        <end position="509"/>
    </location>
</feature>
<feature type="transmembrane region" description="Beta stranded" evidence="2">
    <location>
        <begin position="517"/>
        <end position="529"/>
    </location>
</feature>
<feature type="transmembrane region" description="Beta stranded" evidence="2">
    <location>
        <begin position="535"/>
        <end position="550"/>
    </location>
</feature>
<feature type="transmembrane region" description="Beta stranded" evidence="2">
    <location>
        <begin position="558"/>
        <end position="572"/>
    </location>
</feature>
<feature type="transmembrane region" description="Beta stranded" evidence="2">
    <location>
        <begin position="585"/>
        <end position="596"/>
    </location>
</feature>
<feature type="transmembrane region" description="Beta stranded" evidence="2">
    <location>
        <begin position="602"/>
        <end position="614"/>
    </location>
</feature>
<feature type="domain" description="TBDR plug" evidence="4">
    <location>
        <begin position="38"/>
        <end position="152"/>
    </location>
</feature>
<feature type="domain" description="TBDR beta-barrel" evidence="4">
    <location>
        <begin position="155"/>
        <end position="614"/>
    </location>
</feature>
<feature type="short sequence motif" description="TonB box">
    <location>
        <begin position="26"/>
        <end position="33"/>
    </location>
</feature>
<feature type="short sequence motif" description="TonB C-terminal box">
    <location>
        <begin position="597"/>
        <end position="614"/>
    </location>
</feature>
<feature type="binding site" evidence="3">
    <location>
        <position position="83"/>
    </location>
    <ligand>
        <name>cyanocob(III)alamin</name>
        <dbReference type="ChEBI" id="CHEBI:17439"/>
    </ligand>
</feature>
<feature type="binding site" evidence="3">
    <location>
        <position position="85"/>
    </location>
    <ligand>
        <name>cyanocob(III)alamin</name>
        <dbReference type="ChEBI" id="CHEBI:17439"/>
    </ligand>
</feature>
<feature type="binding site" evidence="3">
    <location>
        <position position="92"/>
    </location>
    <ligand>
        <name>cyanocob(III)alamin</name>
        <dbReference type="ChEBI" id="CHEBI:17439"/>
    </ligand>
</feature>
<feature type="binding site" evidence="3">
    <location>
        <begin position="110"/>
        <end position="111"/>
    </location>
    <ligand>
        <name>cyanocob(III)alamin</name>
        <dbReference type="ChEBI" id="CHEBI:17439"/>
    </ligand>
</feature>
<feature type="binding site" evidence="1">
    <location>
        <position position="199"/>
    </location>
    <ligand>
        <name>Ca(2+)</name>
        <dbReference type="ChEBI" id="CHEBI:29108"/>
        <label>1</label>
    </ligand>
</feature>
<feature type="binding site" evidence="1">
    <location>
        <position position="211"/>
    </location>
    <ligand>
        <name>Ca(2+)</name>
        <dbReference type="ChEBI" id="CHEBI:29108"/>
        <label>1</label>
    </ligand>
</feature>
<feature type="binding site" evidence="1">
    <location>
        <position position="213"/>
    </location>
    <ligand>
        <name>Ca(2+)</name>
        <dbReference type="ChEBI" id="CHEBI:29108"/>
        <label>1</label>
    </ligand>
</feature>
<feature type="binding site" evidence="1">
    <location>
        <position position="213"/>
    </location>
    <ligand>
        <name>Ca(2+)</name>
        <dbReference type="ChEBI" id="CHEBI:29108"/>
        <label>2</label>
    </ligand>
</feature>
<feature type="binding site" evidence="1">
    <location>
        <position position="215"/>
    </location>
    <ligand>
        <name>Ca(2+)</name>
        <dbReference type="ChEBI" id="CHEBI:29108"/>
        <label>1</label>
    </ligand>
</feature>
<feature type="binding site" evidence="1">
    <location>
        <position position="215"/>
    </location>
    <ligand>
        <name>Ca(2+)</name>
        <dbReference type="ChEBI" id="CHEBI:29108"/>
        <label>2</label>
    </ligand>
</feature>
<feature type="binding site" evidence="1">
    <location>
        <position position="249"/>
    </location>
    <ligand>
        <name>Ca(2+)</name>
        <dbReference type="ChEBI" id="CHEBI:29108"/>
        <label>2</label>
    </ligand>
</feature>
<feature type="binding site" evidence="1">
    <location>
        <position position="250"/>
    </location>
    <ligand>
        <name>Ca(2+)</name>
        <dbReference type="ChEBI" id="CHEBI:29108"/>
        <label>1</label>
    </ligand>
</feature>
<feature type="binding site" evidence="1">
    <location>
        <position position="250"/>
    </location>
    <ligand>
        <name>Ca(2+)</name>
        <dbReference type="ChEBI" id="CHEBI:29108"/>
        <label>2</label>
    </ligand>
</feature>
<feature type="binding site" evidence="3">
    <location>
        <position position="251"/>
    </location>
    <ligand>
        <name>cyanocob(III)alamin</name>
        <dbReference type="ChEBI" id="CHEBI:17439"/>
    </ligand>
</feature>
<feature type="binding site" evidence="1">
    <location>
        <position position="261"/>
    </location>
    <ligand>
        <name>Ca(2+)</name>
        <dbReference type="ChEBI" id="CHEBI:29108"/>
        <label>2</label>
    </ligand>
</feature>
<feature type="binding site" evidence="3">
    <location>
        <position position="517"/>
    </location>
    <ligand>
        <name>cyanocob(III)alamin</name>
        <dbReference type="ChEBI" id="CHEBI:17439"/>
    </ligand>
</feature>
<feature type="binding site" evidence="3">
    <location>
        <position position="551"/>
    </location>
    <ligand>
        <name>cyanocob(III)alamin</name>
        <dbReference type="ChEBI" id="CHEBI:17439"/>
    </ligand>
</feature>
<organism>
    <name type="scientific">Escherichia coli</name>
    <dbReference type="NCBI Taxonomy" id="562"/>
    <lineage>
        <taxon>Bacteria</taxon>
        <taxon>Pseudomonadati</taxon>
        <taxon>Pseudomonadota</taxon>
        <taxon>Gammaproteobacteria</taxon>
        <taxon>Enterobacterales</taxon>
        <taxon>Enterobacteriaceae</taxon>
        <taxon>Escherichia</taxon>
    </lineage>
</organism>
<evidence type="ECO:0000250" key="1"/>
<evidence type="ECO:0000255" key="2"/>
<evidence type="ECO:0000255" key="3">
    <source>
        <dbReference type="HAMAP-Rule" id="MF_01531"/>
    </source>
</evidence>
<evidence type="ECO:0000255" key="4">
    <source>
        <dbReference type="PROSITE-ProRule" id="PRU01360"/>
    </source>
</evidence>
<evidence type="ECO:0000305" key="5"/>
<sequence length="614" mass="69053">MIKKYWFLMVYSVTAFSVWAQDTPLDTLVVTANRFQEPLSTVLAPVTIVTREDIDRWQVSSVNDVLRRLPGVAISQHGGEGQLSTIFVRGTNSNHTLVLIDGVRLNLAGVSGAADLSQFPVALVQRIEYIRGPRSAIYGSDAIGGVINIITSRENTGTEISAGWGSNSYQHYDISTHQQLGENTRVTLLGDYTYTRGFDAVAYGSTGMQPQSDRDGFLSKTFYGKLEHNLSDTWSGFVRGYGYNNRTKYDAWYSPGSPLIDTRKLYSQSWDAGLRYAGETLQSQLVSSYSHSKDYNYDPHYGRYDTSANLDDMKQYNLQWTNSVTVGHGNVGAGIDWQKQSTTPGTGYLPKGYDQRNTGIYLTGLQKLGDFTLEGAVRNDDNSQFERHTTWQSSAGWEFIEGYRFIASYGTAFKAPNLGQLYGMYGNPNLAPEKSKQWEGAFEGLTGGVNWRISGYRNDISEMINYNPHTLRYYNDGKVHVKGIEATVNFDTGALTHTVSYDYTDARNALTDKPLERRPKLQVKYQLDWQVFDFDWGITYQYMGSRYDSDYSSWPYKSVKMGGVSLWDVAVAYPVTPHLIVRGKIANLFNKDYETGYGYQAAGREYILSGSYTF</sequence>
<dbReference type="EMBL" id="AJ278144">
    <property type="protein sequence ID" value="CAC39289.1"/>
    <property type="status" value="ALT_INIT"/>
    <property type="molecule type" value="Genomic_DNA"/>
</dbReference>
<dbReference type="RefSeq" id="WP_000593013.1">
    <property type="nucleotide sequence ID" value="NZ_WXYX01000001.1"/>
</dbReference>
<dbReference type="SMR" id="Q93SE0"/>
<dbReference type="STRING" id="585034.ECIAI1_4176"/>
<dbReference type="GO" id="GO:0009279">
    <property type="term" value="C:cell outer membrane"/>
    <property type="evidence" value="ECO:0007669"/>
    <property type="project" value="UniProtKB-SubCell"/>
</dbReference>
<dbReference type="GO" id="GO:0046930">
    <property type="term" value="C:pore complex"/>
    <property type="evidence" value="ECO:0007669"/>
    <property type="project" value="UniProtKB-KW"/>
</dbReference>
<dbReference type="GO" id="GO:0015420">
    <property type="term" value="F:ABC-type vitamin B12 transporter activity"/>
    <property type="evidence" value="ECO:0007669"/>
    <property type="project" value="InterPro"/>
</dbReference>
<dbReference type="GO" id="GO:0046872">
    <property type="term" value="F:metal ion binding"/>
    <property type="evidence" value="ECO:0007669"/>
    <property type="project" value="UniProtKB-KW"/>
</dbReference>
<dbReference type="GO" id="GO:0015288">
    <property type="term" value="F:porin activity"/>
    <property type="evidence" value="ECO:0007669"/>
    <property type="project" value="UniProtKB-KW"/>
</dbReference>
<dbReference type="GO" id="GO:0006811">
    <property type="term" value="P:monoatomic ion transport"/>
    <property type="evidence" value="ECO:0007669"/>
    <property type="project" value="UniProtKB-KW"/>
</dbReference>
<dbReference type="CDD" id="cd01347">
    <property type="entry name" value="ligand_gated_channel"/>
    <property type="match status" value="1"/>
</dbReference>
<dbReference type="FunFam" id="2.170.130.10:FF:000002">
    <property type="entry name" value="Vitamin B12 transporter BtuB"/>
    <property type="match status" value="1"/>
</dbReference>
<dbReference type="FunFam" id="2.40.170.20:FF:000001">
    <property type="entry name" value="Vitamin B12 transporter BtuB"/>
    <property type="match status" value="1"/>
</dbReference>
<dbReference type="Gene3D" id="2.40.170.20">
    <property type="entry name" value="TonB-dependent receptor, beta-barrel domain"/>
    <property type="match status" value="1"/>
</dbReference>
<dbReference type="Gene3D" id="2.170.130.10">
    <property type="entry name" value="TonB-dependent receptor, plug domain"/>
    <property type="match status" value="1"/>
</dbReference>
<dbReference type="HAMAP" id="MF_01531">
    <property type="entry name" value="BtuB"/>
    <property type="match status" value="1"/>
</dbReference>
<dbReference type="InterPro" id="IPR010101">
    <property type="entry name" value="B12_transptr_BtuB"/>
</dbReference>
<dbReference type="InterPro" id="IPR012910">
    <property type="entry name" value="Plug_dom"/>
</dbReference>
<dbReference type="InterPro" id="IPR037066">
    <property type="entry name" value="Plug_dom_sf"/>
</dbReference>
<dbReference type="InterPro" id="IPR039426">
    <property type="entry name" value="TonB-dep_rcpt-like"/>
</dbReference>
<dbReference type="InterPro" id="IPR000531">
    <property type="entry name" value="TonB-dep_rcpt_b-brl"/>
</dbReference>
<dbReference type="InterPro" id="IPR010916">
    <property type="entry name" value="TonB_box_CS"/>
</dbReference>
<dbReference type="InterPro" id="IPR036942">
    <property type="entry name" value="TonB_rcpt_b-brl_sf"/>
</dbReference>
<dbReference type="InterPro" id="IPR010917">
    <property type="entry name" value="TonB_rcpt_CS"/>
</dbReference>
<dbReference type="NCBIfam" id="NF007926">
    <property type="entry name" value="PRK10641.1"/>
    <property type="match status" value="1"/>
</dbReference>
<dbReference type="NCBIfam" id="TIGR01779">
    <property type="entry name" value="TonB-B12"/>
    <property type="match status" value="1"/>
</dbReference>
<dbReference type="PANTHER" id="PTHR30069:SF53">
    <property type="entry name" value="COLICIN I RECEPTOR-RELATED"/>
    <property type="match status" value="1"/>
</dbReference>
<dbReference type="PANTHER" id="PTHR30069">
    <property type="entry name" value="TONB-DEPENDENT OUTER MEMBRANE RECEPTOR"/>
    <property type="match status" value="1"/>
</dbReference>
<dbReference type="Pfam" id="PF07715">
    <property type="entry name" value="Plug"/>
    <property type="match status" value="1"/>
</dbReference>
<dbReference type="Pfam" id="PF00593">
    <property type="entry name" value="TonB_dep_Rec_b-barrel"/>
    <property type="match status" value="1"/>
</dbReference>
<dbReference type="SUPFAM" id="SSF56935">
    <property type="entry name" value="Porins"/>
    <property type="match status" value="1"/>
</dbReference>
<dbReference type="PROSITE" id="PS00430">
    <property type="entry name" value="TONB_DEPENDENT_REC_1"/>
    <property type="match status" value="1"/>
</dbReference>
<dbReference type="PROSITE" id="PS01156">
    <property type="entry name" value="TONB_DEPENDENT_REC_2"/>
    <property type="match status" value="1"/>
</dbReference>
<dbReference type="PROSITE" id="PS52016">
    <property type="entry name" value="TONB_DEPENDENT_REC_3"/>
    <property type="match status" value="1"/>
</dbReference>
<reference key="1">
    <citation type="journal article" date="2001" name="Infect. Immun.">
        <title>Identification and characterization of a novel genomic island integrated at selC in locus of enterocyte effacement-negative, Shiga toxin-producing Escherichia coli.</title>
        <authorList>
            <person name="Schmidt H."/>
            <person name="Zhang W.-L."/>
            <person name="Hemmrich U."/>
            <person name="Jelacic S."/>
            <person name="Brunder W."/>
            <person name="Tarr P.I."/>
            <person name="Dobrindt U."/>
            <person name="Hacker J."/>
            <person name="Karch H."/>
        </authorList>
    </citation>
    <scope>NUCLEOTIDE SEQUENCE [GENOMIC DNA]</scope>
    <source>
        <strain>O91:H- / 4797/97</strain>
    </source>
</reference>
<comment type="function">
    <text evidence="1">Involved in the active translocation of vitamin B12 (cyanocobalamin) across the outer membrane to the periplasmic space. It derives its energy for transport by interacting with the trans-periplasmic membrane protein TonB (By similarity).</text>
</comment>
<comment type="subcellular location">
    <subcellularLocation>
        <location evidence="4">Cell outer membrane</location>
        <topology evidence="4">Multi-pass membrane protein</topology>
    </subcellularLocation>
</comment>
<comment type="similarity">
    <text evidence="5">Belongs to the TonB-dependent receptor family. BtuB (TC 1.B.14.3.1) subfamily.</text>
</comment>
<comment type="sequence caution" evidence="5">
    <conflict type="erroneous initiation">
        <sequence resource="EMBL-CDS" id="CAC39289"/>
    </conflict>
</comment>
<keyword id="KW-0106">Calcium</keyword>
<keyword id="KW-0998">Cell outer membrane</keyword>
<keyword id="KW-0406">Ion transport</keyword>
<keyword id="KW-0472">Membrane</keyword>
<keyword id="KW-0479">Metal-binding</keyword>
<keyword id="KW-0626">Porin</keyword>
<keyword id="KW-0732">Signal</keyword>
<keyword id="KW-0798">TonB box</keyword>
<keyword id="KW-0812">Transmembrane</keyword>
<keyword id="KW-1134">Transmembrane beta strand</keyword>
<keyword id="KW-0813">Transport</keyword>
<protein>
    <recommendedName>
        <fullName>Vitamin B12 transporter BtuB</fullName>
    </recommendedName>
    <alternativeName>
        <fullName>Cobalamin receptor</fullName>
    </alternativeName>
    <alternativeName>
        <fullName>Outer membrane cobalamin translocator</fullName>
    </alternativeName>
</protein>
<proteinExistence type="inferred from homology"/>
<name>BTUB_ECOLX</name>
<accession>Q93SE0</accession>
<gene>
    <name type="primary">btuB</name>
</gene>